<comment type="function">
    <text evidence="1">Located on the platform of the 30S subunit, it bridges several disparate RNA helices of the 16S rRNA. Forms part of the Shine-Dalgarno cleft in the 70S ribosome.</text>
</comment>
<comment type="subunit">
    <text evidence="1">Part of the 30S ribosomal subunit. Interacts with proteins S7 and S18. Binds to IF-3.</text>
</comment>
<comment type="similarity">
    <text evidence="1">Belongs to the universal ribosomal protein uS11 family.</text>
</comment>
<name>RS11_BORGP</name>
<accession>Q661B9</accession>
<gene>
    <name evidence="1" type="primary">rpsK</name>
    <name type="ordered locus">BG0513</name>
</gene>
<evidence type="ECO:0000255" key="1">
    <source>
        <dbReference type="HAMAP-Rule" id="MF_01310"/>
    </source>
</evidence>
<evidence type="ECO:0000305" key="2"/>
<proteinExistence type="inferred from homology"/>
<feature type="chain" id="PRO_0000123114" description="Small ribosomal subunit protein uS11">
    <location>
        <begin position="1"/>
        <end position="130"/>
    </location>
</feature>
<sequence length="130" mass="13879">MSAKLSTNSKKKIKRNIGEGNVYIQATFNNTIVTVSDIKGNALAWASAGGMGFKGAKKSTPYAAQITAESALNKVRDFGINYVHVYIKGPGIGRESAIRAIGSIGMTVKSISDITPIPHNGCRPKKTRRV</sequence>
<keyword id="KW-0687">Ribonucleoprotein</keyword>
<keyword id="KW-0689">Ribosomal protein</keyword>
<keyword id="KW-0694">RNA-binding</keyword>
<keyword id="KW-0699">rRNA-binding</keyword>
<organism>
    <name type="scientific">Borrelia garinii subsp. bavariensis (strain ATCC BAA-2496 / DSM 23469 / PBi)</name>
    <name type="common">Borreliella bavariensis</name>
    <dbReference type="NCBI Taxonomy" id="290434"/>
    <lineage>
        <taxon>Bacteria</taxon>
        <taxon>Pseudomonadati</taxon>
        <taxon>Spirochaetota</taxon>
        <taxon>Spirochaetia</taxon>
        <taxon>Spirochaetales</taxon>
        <taxon>Borreliaceae</taxon>
        <taxon>Borreliella</taxon>
    </lineage>
</organism>
<dbReference type="EMBL" id="CP000013">
    <property type="protein sequence ID" value="AAU07352.1"/>
    <property type="molecule type" value="Genomic_DNA"/>
</dbReference>
<dbReference type="RefSeq" id="WP_002557092.1">
    <property type="nucleotide sequence ID" value="NZ_CP028872.1"/>
</dbReference>
<dbReference type="SMR" id="Q661B9"/>
<dbReference type="GeneID" id="83865976"/>
<dbReference type="KEGG" id="bga:BG0513"/>
<dbReference type="eggNOG" id="COG0100">
    <property type="taxonomic scope" value="Bacteria"/>
</dbReference>
<dbReference type="HOGENOM" id="CLU_072439_5_0_12"/>
<dbReference type="OrthoDB" id="9806415at2"/>
<dbReference type="Proteomes" id="UP000002276">
    <property type="component" value="Chromosome"/>
</dbReference>
<dbReference type="GO" id="GO:1990904">
    <property type="term" value="C:ribonucleoprotein complex"/>
    <property type="evidence" value="ECO:0007669"/>
    <property type="project" value="UniProtKB-KW"/>
</dbReference>
<dbReference type="GO" id="GO:0005840">
    <property type="term" value="C:ribosome"/>
    <property type="evidence" value="ECO:0007669"/>
    <property type="project" value="UniProtKB-KW"/>
</dbReference>
<dbReference type="GO" id="GO:0019843">
    <property type="term" value="F:rRNA binding"/>
    <property type="evidence" value="ECO:0007669"/>
    <property type="project" value="UniProtKB-UniRule"/>
</dbReference>
<dbReference type="GO" id="GO:0003735">
    <property type="term" value="F:structural constituent of ribosome"/>
    <property type="evidence" value="ECO:0007669"/>
    <property type="project" value="InterPro"/>
</dbReference>
<dbReference type="GO" id="GO:0006412">
    <property type="term" value="P:translation"/>
    <property type="evidence" value="ECO:0007669"/>
    <property type="project" value="UniProtKB-UniRule"/>
</dbReference>
<dbReference type="FunFam" id="3.30.420.80:FF:000010">
    <property type="entry name" value="30S ribosomal protein S11"/>
    <property type="match status" value="1"/>
</dbReference>
<dbReference type="Gene3D" id="3.30.420.80">
    <property type="entry name" value="Ribosomal protein S11"/>
    <property type="match status" value="1"/>
</dbReference>
<dbReference type="HAMAP" id="MF_01310">
    <property type="entry name" value="Ribosomal_uS11"/>
    <property type="match status" value="1"/>
</dbReference>
<dbReference type="InterPro" id="IPR001971">
    <property type="entry name" value="Ribosomal_uS11"/>
</dbReference>
<dbReference type="InterPro" id="IPR019981">
    <property type="entry name" value="Ribosomal_uS11_bac-type"/>
</dbReference>
<dbReference type="InterPro" id="IPR018102">
    <property type="entry name" value="Ribosomal_uS11_CS"/>
</dbReference>
<dbReference type="InterPro" id="IPR036967">
    <property type="entry name" value="Ribosomal_uS11_sf"/>
</dbReference>
<dbReference type="NCBIfam" id="NF003698">
    <property type="entry name" value="PRK05309.1"/>
    <property type="match status" value="1"/>
</dbReference>
<dbReference type="NCBIfam" id="TIGR03632">
    <property type="entry name" value="uS11_bact"/>
    <property type="match status" value="1"/>
</dbReference>
<dbReference type="PANTHER" id="PTHR11759">
    <property type="entry name" value="40S RIBOSOMAL PROTEIN S14/30S RIBOSOMAL PROTEIN S11"/>
    <property type="match status" value="1"/>
</dbReference>
<dbReference type="Pfam" id="PF00411">
    <property type="entry name" value="Ribosomal_S11"/>
    <property type="match status" value="1"/>
</dbReference>
<dbReference type="PIRSF" id="PIRSF002131">
    <property type="entry name" value="Ribosomal_S11"/>
    <property type="match status" value="1"/>
</dbReference>
<dbReference type="SUPFAM" id="SSF53137">
    <property type="entry name" value="Translational machinery components"/>
    <property type="match status" value="1"/>
</dbReference>
<dbReference type="PROSITE" id="PS00054">
    <property type="entry name" value="RIBOSOMAL_S11"/>
    <property type="match status" value="1"/>
</dbReference>
<reference key="1">
    <citation type="journal article" date="2004" name="Nucleic Acids Res.">
        <title>Comparative analysis of the Borrelia garinii genome.</title>
        <authorList>
            <person name="Gloeckner G."/>
            <person name="Lehmann R."/>
            <person name="Romualdi A."/>
            <person name="Pradella S."/>
            <person name="Schulte-Spechtel U."/>
            <person name="Schilhabel M."/>
            <person name="Wilske B."/>
            <person name="Suehnel J."/>
            <person name="Platzer M."/>
        </authorList>
    </citation>
    <scope>NUCLEOTIDE SEQUENCE [LARGE SCALE GENOMIC DNA]</scope>
    <source>
        <strain>ATCC BAA-2496 / DSM 23469 / PBi</strain>
    </source>
</reference>
<protein>
    <recommendedName>
        <fullName evidence="1">Small ribosomal subunit protein uS11</fullName>
    </recommendedName>
    <alternativeName>
        <fullName evidence="2">30S ribosomal protein S11</fullName>
    </alternativeName>
</protein>